<comment type="function">
    <text evidence="1">Promotes RNA polymerase assembly. Latches the N- and C-terminal regions of the beta' subunit thereby facilitating its interaction with the beta and alpha subunits.</text>
</comment>
<comment type="catalytic activity">
    <reaction evidence="1">
        <text>RNA(n) + a ribonucleoside 5'-triphosphate = RNA(n+1) + diphosphate</text>
        <dbReference type="Rhea" id="RHEA:21248"/>
        <dbReference type="Rhea" id="RHEA-COMP:14527"/>
        <dbReference type="Rhea" id="RHEA-COMP:17342"/>
        <dbReference type="ChEBI" id="CHEBI:33019"/>
        <dbReference type="ChEBI" id="CHEBI:61557"/>
        <dbReference type="ChEBI" id="CHEBI:140395"/>
        <dbReference type="EC" id="2.7.7.6"/>
    </reaction>
</comment>
<comment type="subunit">
    <text evidence="1">The RNAP catalytic core consists of 2 alpha, 1 beta, 1 beta' and 1 omega subunit. When a sigma factor is associated with the core the holoenzyme is formed, which can initiate transcription.</text>
</comment>
<comment type="similarity">
    <text evidence="1">Belongs to the RNA polymerase subunit omega family.</text>
</comment>
<sequence>MARVTVEDCVDKVPNRFELVMLAAHRAREIASGSALTIDRDNDKNPVVALREIAEETQSAESLRERMIESHQTQIEVDEPEEDQMALLMGSEVDRPVQDDMSEEKLLRALMEAQGQN</sequence>
<dbReference type="EC" id="2.7.7.6" evidence="1"/>
<dbReference type="EMBL" id="CP000661">
    <property type="protein sequence ID" value="ABP71465.1"/>
    <property type="molecule type" value="Genomic_DNA"/>
</dbReference>
<dbReference type="SMR" id="A4WVQ1"/>
<dbReference type="STRING" id="349102.Rsph17025_2577"/>
<dbReference type="KEGG" id="rsq:Rsph17025_2577"/>
<dbReference type="eggNOG" id="COG1758">
    <property type="taxonomic scope" value="Bacteria"/>
</dbReference>
<dbReference type="HOGENOM" id="CLU_125406_2_0_5"/>
<dbReference type="BioCyc" id="RSPH349102:G1G8M-2656-MONOMER"/>
<dbReference type="GO" id="GO:0000428">
    <property type="term" value="C:DNA-directed RNA polymerase complex"/>
    <property type="evidence" value="ECO:0007669"/>
    <property type="project" value="UniProtKB-KW"/>
</dbReference>
<dbReference type="GO" id="GO:0003677">
    <property type="term" value="F:DNA binding"/>
    <property type="evidence" value="ECO:0007669"/>
    <property type="project" value="UniProtKB-UniRule"/>
</dbReference>
<dbReference type="GO" id="GO:0003899">
    <property type="term" value="F:DNA-directed RNA polymerase activity"/>
    <property type="evidence" value="ECO:0007669"/>
    <property type="project" value="UniProtKB-UniRule"/>
</dbReference>
<dbReference type="GO" id="GO:0006351">
    <property type="term" value="P:DNA-templated transcription"/>
    <property type="evidence" value="ECO:0007669"/>
    <property type="project" value="UniProtKB-UniRule"/>
</dbReference>
<dbReference type="Gene3D" id="3.90.940.10">
    <property type="match status" value="1"/>
</dbReference>
<dbReference type="HAMAP" id="MF_00366">
    <property type="entry name" value="RNApol_bact_RpoZ"/>
    <property type="match status" value="1"/>
</dbReference>
<dbReference type="InterPro" id="IPR003716">
    <property type="entry name" value="DNA-dir_RNA_pol_omega"/>
</dbReference>
<dbReference type="InterPro" id="IPR006110">
    <property type="entry name" value="Pol_omega/Rpo6/RPB6"/>
</dbReference>
<dbReference type="InterPro" id="IPR036161">
    <property type="entry name" value="RPB6/omega-like_sf"/>
</dbReference>
<dbReference type="NCBIfam" id="TIGR00690">
    <property type="entry name" value="rpoZ"/>
    <property type="match status" value="1"/>
</dbReference>
<dbReference type="PANTHER" id="PTHR34476">
    <property type="entry name" value="DNA-DIRECTED RNA POLYMERASE SUBUNIT OMEGA"/>
    <property type="match status" value="1"/>
</dbReference>
<dbReference type="PANTHER" id="PTHR34476:SF1">
    <property type="entry name" value="DNA-DIRECTED RNA POLYMERASE SUBUNIT OMEGA"/>
    <property type="match status" value="1"/>
</dbReference>
<dbReference type="Pfam" id="PF01192">
    <property type="entry name" value="RNA_pol_Rpb6"/>
    <property type="match status" value="1"/>
</dbReference>
<dbReference type="SMART" id="SM01409">
    <property type="entry name" value="RNA_pol_Rpb6"/>
    <property type="match status" value="1"/>
</dbReference>
<dbReference type="SUPFAM" id="SSF63562">
    <property type="entry name" value="RPB6/omega subunit-like"/>
    <property type="match status" value="1"/>
</dbReference>
<reference key="1">
    <citation type="submission" date="2007-04" db="EMBL/GenBank/DDBJ databases">
        <title>Complete sequence of chromosome of Rhodobacter sphaeroides ATCC 17025.</title>
        <authorList>
            <consortium name="US DOE Joint Genome Institute"/>
            <person name="Copeland A."/>
            <person name="Lucas S."/>
            <person name="Lapidus A."/>
            <person name="Barry K."/>
            <person name="Detter J.C."/>
            <person name="Glavina del Rio T."/>
            <person name="Hammon N."/>
            <person name="Israni S."/>
            <person name="Dalin E."/>
            <person name="Tice H."/>
            <person name="Pitluck S."/>
            <person name="Chertkov O."/>
            <person name="Brettin T."/>
            <person name="Bruce D."/>
            <person name="Han C."/>
            <person name="Schmutz J."/>
            <person name="Larimer F."/>
            <person name="Land M."/>
            <person name="Hauser L."/>
            <person name="Kyrpides N."/>
            <person name="Kim E."/>
            <person name="Richardson P."/>
            <person name="Mackenzie C."/>
            <person name="Choudhary M."/>
            <person name="Donohue T.J."/>
            <person name="Kaplan S."/>
        </authorList>
    </citation>
    <scope>NUCLEOTIDE SEQUENCE [LARGE SCALE GENOMIC DNA]</scope>
    <source>
        <strain>ATCC 17025 / ATH 2.4.3</strain>
    </source>
</reference>
<organism>
    <name type="scientific">Cereibacter sphaeroides (strain ATCC 17025 / ATH 2.4.3)</name>
    <name type="common">Rhodobacter sphaeroides</name>
    <dbReference type="NCBI Taxonomy" id="349102"/>
    <lineage>
        <taxon>Bacteria</taxon>
        <taxon>Pseudomonadati</taxon>
        <taxon>Pseudomonadota</taxon>
        <taxon>Alphaproteobacteria</taxon>
        <taxon>Rhodobacterales</taxon>
        <taxon>Paracoccaceae</taxon>
        <taxon>Cereibacter</taxon>
    </lineage>
</organism>
<gene>
    <name evidence="1" type="primary">rpoZ</name>
    <name type="ordered locus">Rsph17025_2577</name>
</gene>
<protein>
    <recommendedName>
        <fullName evidence="1">DNA-directed RNA polymerase subunit omega</fullName>
        <shortName evidence="1">RNAP omega subunit</shortName>
        <ecNumber evidence="1">2.7.7.6</ecNumber>
    </recommendedName>
    <alternativeName>
        <fullName evidence="1">RNA polymerase omega subunit</fullName>
    </alternativeName>
    <alternativeName>
        <fullName evidence="1">Transcriptase subunit omega</fullName>
    </alternativeName>
</protein>
<accession>A4WVQ1</accession>
<feature type="chain" id="PRO_1000005995" description="DNA-directed RNA polymerase subunit omega">
    <location>
        <begin position="1"/>
        <end position="117"/>
    </location>
</feature>
<name>RPOZ_CERS5</name>
<proteinExistence type="inferred from homology"/>
<keyword id="KW-0240">DNA-directed RNA polymerase</keyword>
<keyword id="KW-0548">Nucleotidyltransferase</keyword>
<keyword id="KW-0804">Transcription</keyword>
<keyword id="KW-0808">Transferase</keyword>
<evidence type="ECO:0000255" key="1">
    <source>
        <dbReference type="HAMAP-Rule" id="MF_00366"/>
    </source>
</evidence>